<protein>
    <recommendedName>
        <fullName evidence="1">Large ribosomal subunit protein uL1</fullName>
    </recommendedName>
    <alternativeName>
        <fullName evidence="2">50S ribosomal protein L1</fullName>
    </alternativeName>
</protein>
<sequence length="234" mass="24803">MAKLTKRMRVIRDKVDVTKQYDINEAVALLKELATAKFVESVDVAVNLGIDARKSDQNVRGATVLPHGTGRSVRVAVFAQGANAEAAKEAGAELVGMDDLADQIKKGEMNFDVVIASPDAMRVVGQLGQILGPRGLMPNPKVGTVTPNVAEAVKNAKAGQVRYRNDKNGIIHTTIGKVDFDSDKLKENLESLVVALKKAKPATAKGIYIKKISLSTTMGAGVAIDQSGLTAVVN</sequence>
<reference key="1">
    <citation type="journal article" date="2010" name="J. Bacteriol.">
        <title>Genome sequence of the deep-rooted Yersinia pestis strain Angola reveals new insights into the evolution and pangenome of the plague bacterium.</title>
        <authorList>
            <person name="Eppinger M."/>
            <person name="Worsham P.L."/>
            <person name="Nikolich M.P."/>
            <person name="Riley D.R."/>
            <person name="Sebastian Y."/>
            <person name="Mou S."/>
            <person name="Achtman M."/>
            <person name="Lindler L.E."/>
            <person name="Ravel J."/>
        </authorList>
    </citation>
    <scope>NUCLEOTIDE SEQUENCE [LARGE SCALE GENOMIC DNA]</scope>
    <source>
        <strain>Angola</strain>
    </source>
</reference>
<comment type="function">
    <text evidence="1">Binds directly to 23S rRNA. The L1 stalk is quite mobile in the ribosome, and is involved in E site tRNA release.</text>
</comment>
<comment type="function">
    <text evidence="1">Protein L1 is also a translational repressor protein, it controls the translation of the L11 operon by binding to its mRNA.</text>
</comment>
<comment type="subunit">
    <text evidence="1">Part of the 50S ribosomal subunit.</text>
</comment>
<comment type="similarity">
    <text evidence="1">Belongs to the universal ribosomal protein uL1 family.</text>
</comment>
<gene>
    <name evidence="1" type="primary">rplA</name>
    <name type="ordered locus">YpAngola_A2807</name>
</gene>
<keyword id="KW-0678">Repressor</keyword>
<keyword id="KW-0687">Ribonucleoprotein</keyword>
<keyword id="KW-0689">Ribosomal protein</keyword>
<keyword id="KW-0694">RNA-binding</keyword>
<keyword id="KW-0699">rRNA-binding</keyword>
<keyword id="KW-0810">Translation regulation</keyword>
<keyword id="KW-0820">tRNA-binding</keyword>
<name>RL1_YERPG</name>
<proteinExistence type="inferred from homology"/>
<feature type="chain" id="PRO_1000141487" description="Large ribosomal subunit protein uL1">
    <location>
        <begin position="1"/>
        <end position="234"/>
    </location>
</feature>
<evidence type="ECO:0000255" key="1">
    <source>
        <dbReference type="HAMAP-Rule" id="MF_01318"/>
    </source>
</evidence>
<evidence type="ECO:0000305" key="2"/>
<organism>
    <name type="scientific">Yersinia pestis bv. Antiqua (strain Angola)</name>
    <dbReference type="NCBI Taxonomy" id="349746"/>
    <lineage>
        <taxon>Bacteria</taxon>
        <taxon>Pseudomonadati</taxon>
        <taxon>Pseudomonadota</taxon>
        <taxon>Gammaproteobacteria</taxon>
        <taxon>Enterobacterales</taxon>
        <taxon>Yersiniaceae</taxon>
        <taxon>Yersinia</taxon>
    </lineage>
</organism>
<accession>A9R0H5</accession>
<dbReference type="EMBL" id="CP000901">
    <property type="protein sequence ID" value="ABX85262.1"/>
    <property type="molecule type" value="Genomic_DNA"/>
</dbReference>
<dbReference type="RefSeq" id="WP_002210673.1">
    <property type="nucleotide sequence ID" value="NZ_CP009935.1"/>
</dbReference>
<dbReference type="SMR" id="A9R0H5"/>
<dbReference type="GeneID" id="57974968"/>
<dbReference type="KEGG" id="ypg:YpAngola_A2807"/>
<dbReference type="PATRIC" id="fig|349746.12.peg.3840"/>
<dbReference type="GO" id="GO:0022625">
    <property type="term" value="C:cytosolic large ribosomal subunit"/>
    <property type="evidence" value="ECO:0007669"/>
    <property type="project" value="TreeGrafter"/>
</dbReference>
<dbReference type="GO" id="GO:0019843">
    <property type="term" value="F:rRNA binding"/>
    <property type="evidence" value="ECO:0007669"/>
    <property type="project" value="UniProtKB-UniRule"/>
</dbReference>
<dbReference type="GO" id="GO:0003735">
    <property type="term" value="F:structural constituent of ribosome"/>
    <property type="evidence" value="ECO:0007669"/>
    <property type="project" value="InterPro"/>
</dbReference>
<dbReference type="GO" id="GO:0000049">
    <property type="term" value="F:tRNA binding"/>
    <property type="evidence" value="ECO:0007669"/>
    <property type="project" value="UniProtKB-KW"/>
</dbReference>
<dbReference type="GO" id="GO:0006417">
    <property type="term" value="P:regulation of translation"/>
    <property type="evidence" value="ECO:0007669"/>
    <property type="project" value="UniProtKB-KW"/>
</dbReference>
<dbReference type="GO" id="GO:0006412">
    <property type="term" value="P:translation"/>
    <property type="evidence" value="ECO:0007669"/>
    <property type="project" value="UniProtKB-UniRule"/>
</dbReference>
<dbReference type="CDD" id="cd00403">
    <property type="entry name" value="Ribosomal_L1"/>
    <property type="match status" value="1"/>
</dbReference>
<dbReference type="FunFam" id="3.40.50.790:FF:000001">
    <property type="entry name" value="50S ribosomal protein L1"/>
    <property type="match status" value="1"/>
</dbReference>
<dbReference type="Gene3D" id="3.30.190.20">
    <property type="match status" value="1"/>
</dbReference>
<dbReference type="Gene3D" id="3.40.50.790">
    <property type="match status" value="1"/>
</dbReference>
<dbReference type="HAMAP" id="MF_01318_B">
    <property type="entry name" value="Ribosomal_uL1_B"/>
    <property type="match status" value="1"/>
</dbReference>
<dbReference type="InterPro" id="IPR005878">
    <property type="entry name" value="Ribosom_uL1_bac-type"/>
</dbReference>
<dbReference type="InterPro" id="IPR002143">
    <property type="entry name" value="Ribosomal_uL1"/>
</dbReference>
<dbReference type="InterPro" id="IPR023674">
    <property type="entry name" value="Ribosomal_uL1-like"/>
</dbReference>
<dbReference type="InterPro" id="IPR028364">
    <property type="entry name" value="Ribosomal_uL1/biogenesis"/>
</dbReference>
<dbReference type="InterPro" id="IPR016095">
    <property type="entry name" value="Ribosomal_uL1_3-a/b-sand"/>
</dbReference>
<dbReference type="InterPro" id="IPR023673">
    <property type="entry name" value="Ribosomal_uL1_CS"/>
</dbReference>
<dbReference type="NCBIfam" id="TIGR01169">
    <property type="entry name" value="rplA_bact"/>
    <property type="match status" value="1"/>
</dbReference>
<dbReference type="PANTHER" id="PTHR36427">
    <property type="entry name" value="54S RIBOSOMAL PROTEIN L1, MITOCHONDRIAL"/>
    <property type="match status" value="1"/>
</dbReference>
<dbReference type="PANTHER" id="PTHR36427:SF3">
    <property type="entry name" value="LARGE RIBOSOMAL SUBUNIT PROTEIN UL1M"/>
    <property type="match status" value="1"/>
</dbReference>
<dbReference type="Pfam" id="PF00687">
    <property type="entry name" value="Ribosomal_L1"/>
    <property type="match status" value="1"/>
</dbReference>
<dbReference type="PIRSF" id="PIRSF002155">
    <property type="entry name" value="Ribosomal_L1"/>
    <property type="match status" value="1"/>
</dbReference>
<dbReference type="SUPFAM" id="SSF56808">
    <property type="entry name" value="Ribosomal protein L1"/>
    <property type="match status" value="1"/>
</dbReference>
<dbReference type="PROSITE" id="PS01199">
    <property type="entry name" value="RIBOSOMAL_L1"/>
    <property type="match status" value="1"/>
</dbReference>